<evidence type="ECO:0000250" key="1">
    <source>
        <dbReference type="UniProtKB" id="P84704"/>
    </source>
</evidence>
<evidence type="ECO:0000255" key="2"/>
<evidence type="ECO:0000256" key="3">
    <source>
        <dbReference type="SAM" id="MobiDB-lite"/>
    </source>
</evidence>
<evidence type="ECO:0000303" key="4">
    <source>
    </source>
</evidence>
<evidence type="ECO:0000305" key="5"/>
<evidence type="ECO:0000305" key="6">
    <source>
    </source>
</evidence>
<reference key="1">
    <citation type="journal article" date="2018" name="Peptides">
        <title>Definition of the R-superfamily of conotoxins: structural convergence of helix-loop-helix peptidic scaffolds.</title>
        <authorList>
            <person name="Moeller C."/>
            <person name="Dovell S."/>
            <person name="Melaun C."/>
            <person name="Mari F."/>
        </authorList>
    </citation>
    <scope>NUCLEOTIDE SEQUENCE [MRNA]</scope>
    <source>
        <tissue>Venom duct</tissue>
    </source>
</reference>
<organism>
    <name type="scientific">Conus villepinii</name>
    <name type="common">Villepin's cone</name>
    <dbReference type="NCBI Taxonomy" id="257347"/>
    <lineage>
        <taxon>Eukaryota</taxon>
        <taxon>Metazoa</taxon>
        <taxon>Spiralia</taxon>
        <taxon>Lophotrochozoa</taxon>
        <taxon>Mollusca</taxon>
        <taxon>Gastropoda</taxon>
        <taxon>Caenogastropoda</taxon>
        <taxon>Neogastropoda</taxon>
        <taxon>Conoidea</taxon>
        <taxon>Conidae</taxon>
        <taxon>Conus</taxon>
        <taxon>Dauciconus</taxon>
    </lineage>
</organism>
<dbReference type="EMBL" id="MH750036">
    <property type="protein sequence ID" value="AYK27409.1"/>
    <property type="molecule type" value="mRNA"/>
</dbReference>
<dbReference type="GO" id="GO:0005576">
    <property type="term" value="C:extracellular region"/>
    <property type="evidence" value="ECO:0007669"/>
    <property type="project" value="UniProtKB-SubCell"/>
</dbReference>
<dbReference type="GO" id="GO:0015459">
    <property type="term" value="F:potassium channel regulator activity"/>
    <property type="evidence" value="ECO:0007669"/>
    <property type="project" value="UniProtKB-KW"/>
</dbReference>
<dbReference type="GO" id="GO:0090729">
    <property type="term" value="F:toxin activity"/>
    <property type="evidence" value="ECO:0007669"/>
    <property type="project" value="UniProtKB-KW"/>
</dbReference>
<keyword id="KW-0165">Cleavage on pair of basic residues</keyword>
<keyword id="KW-1015">Disulfide bond</keyword>
<keyword id="KW-0872">Ion channel impairing toxin</keyword>
<keyword id="KW-0528">Neurotoxin</keyword>
<keyword id="KW-0632">Potassium channel impairing toxin</keyword>
<keyword id="KW-0964">Secreted</keyword>
<keyword id="KW-0732">Signal</keyword>
<keyword id="KW-0800">Toxin</keyword>
<name>CRE5_CONVL</name>
<accession>A0A3G1VU77</accession>
<proteinExistence type="inferred from homology"/>
<comment type="subcellular location">
    <subcellularLocation>
        <location evidence="6">Secreted</location>
    </subcellularLocation>
</comment>
<comment type="tissue specificity">
    <text evidence="6">Expressed by the venom duct.</text>
</comment>
<comment type="domain">
    <text evidence="5">The cysteine framework is XIV (C-C-C-C).</text>
</comment>
<comment type="similarity">
    <text evidence="5">Belongs to the conotoxin R superfamily.</text>
</comment>
<sequence length="112" mass="12790">MGFRVLVLVVMATTSALPFTFSEEPGRSPFRPALRSEEAQALRHGLTLLLARRADGQPPDMRQPEMRRPEVRQPEFAELSVGQRRWDVDQCMYYCLTGVVGYSYTECQTMCT</sequence>
<feature type="signal peptide" evidence="2">
    <location>
        <begin position="1"/>
        <end position="22"/>
    </location>
</feature>
<feature type="propeptide" id="PRO_0000446998" evidence="6">
    <location>
        <begin position="23"/>
        <end position="85"/>
    </location>
</feature>
<feature type="peptide" id="PRO_0000446999" description="Conotoxin vil14.5" evidence="6">
    <location>
        <begin position="86"/>
        <end position="112"/>
    </location>
</feature>
<feature type="region of interest" description="Disordered" evidence="3">
    <location>
        <begin position="53"/>
        <end position="74"/>
    </location>
</feature>
<feature type="compositionally biased region" description="Basic and acidic residues" evidence="3">
    <location>
        <begin position="62"/>
        <end position="74"/>
    </location>
</feature>
<feature type="disulfide bond" evidence="1">
    <location>
        <begin position="91"/>
        <end position="111"/>
    </location>
</feature>
<feature type="disulfide bond" evidence="1">
    <location>
        <begin position="95"/>
        <end position="107"/>
    </location>
</feature>
<protein>
    <recommendedName>
        <fullName evidence="4">Conotoxin vil14.5</fullName>
    </recommendedName>
</protein>